<comment type="function">
    <text evidence="3 4 5 9">Aminopeptidase which specifically catalyzes the removal of glutamic acid or aspartic acid residues from the N-terminus of peptides (PubMed:17720817, PubMed:17895246, PubMed:22709581). May play a role in the final step of host hemoglobin catabolism, by cleaving hemoglobin-derived oligopeptides in the cytoplasm (Probable).</text>
</comment>
<comment type="catalytic activity">
    <reaction evidence="3 5 9">
        <text>Release of an N-terminal aspartate or glutamate from a peptide, with a preference for aspartate.</text>
        <dbReference type="EC" id="3.4.11.21"/>
    </reaction>
</comment>
<comment type="cofactor">
    <cofactor evidence="5">
        <name>Zn(2+)</name>
        <dbReference type="ChEBI" id="CHEBI:29105"/>
    </cofactor>
    <text evidence="5">Binds 2 Zn(2+) ions per subunit.</text>
</comment>
<comment type="activity regulation">
    <text evidence="3 5">Activated by Co(2+) (PubMed:17720817, PubMed:22709581). Inhibited by high concentrations (&gt;1mM) of Zn(2+) (PubMed:22709581).</text>
</comment>
<comment type="biophysicochemical properties">
    <kinetics>
        <KM evidence="5">625.5 uM for Asn-ACC (at pH 7.5, 37 degrees Celsius and in the presence of Co(2+))</KM>
        <KM evidence="3">327.3 uM for Asp-NHMec (at pH 7.5, 37 degrees Celsius and in the presence of Co(2+))</KM>
        <KM evidence="3">384.8 uM for Asp-NHMec (at pH 7.5, 37 degrees Celsius and in the absence of Co(2+))</KM>
        <KM evidence="5">563.7 uM for Asp-ACC (at pH 7.5, 37 degrees Celsius and in the presence of Co(2+))</KM>
        <KM evidence="5">503.1 uM for Glu-ACC (at pH 7.5, 37 degrees Celsius and in the presence of Co(2+))</KM>
        <KM evidence="3">136.3 uM for Glu-NHMec (at pH 7.5, 37 degrees Celsius and in the presence of Co(2+))</KM>
        <KM evidence="3">135.1 uM for Glu-NHMec (at pH 7.5, 37 degrees Celsius and in the absence of Co(2+))</KM>
        <text evidence="3 5">kcat is 0.028 sec(-1) with for Asn-ACC as substrate (at pH 7.5, 37 degrees Celsius and in the presence of Co(2+)) (PubMed:22709581). kcat is 0.203 sec(-1) with for Asp-ACC as substrate (at pH 7.5, 37 degrees Celsius and in the presence of Co(2+)) (PubMed:22709581). kcat is 0.354 sec(-1) with for Asp-MHMec as substrate (at pH 7.5, 37 degrees Celsius and in the presence of Co(2+)) (PubMed:17720817). kcat is 0.05 sec(-1) with for Asp-MHMec as substrate (at pH 7.5, 37 degrees Celsius and in the absence of Co(2+)) (PubMed:17720817). kcat is 0.2 sec(-1) with for Glu-ACC as substrate (at pH 7.5, 37 degrees Celsius and in the presence of Co(2+)) (PubMed:22709581). kcat is 0.33 sec(-1) with for Glu-MHMec as substrate (at pH 7.5, 37 degrees Celsius and in the presence of Co(2+)) (PubMed:17720817). kcat is 0.011 sec(-1) with for Glu-MHMec as substrate (at pH 7.5, 37 degrees Celsius and in the absence of Co(2+)) (PubMed:17720817).</text>
    </kinetics>
    <phDependence>
        <text evidence="3">Optimum pH is 7.5.</text>
    </phDependence>
</comment>
<comment type="subunit">
    <text evidence="3 5">Homododecamer composed of homodimers and homotrimers that assemble into a tetrahedron shape to create a central tunnel containing the active sites (PubMed:22709581). Homooctamer (PubMed:17720817).</text>
</comment>
<comment type="subcellular location">
    <subcellularLocation>
        <location evidence="3 4">Cytoplasm</location>
    </subcellularLocation>
</comment>
<comment type="developmental stage">
    <text evidence="3 4">Expressed during the asexual blood stage including in rings, trophozoites and schizonts (at protein level).</text>
</comment>
<comment type="disruption phenotype">
    <text evidence="3">RNAi-mediated knockdown causes a loss in aspartyl aminopeptidase activity, the rupture of the food vacuole in ring and schizonts and an accumulation of large lipid droplets and host hemoglobin in trophozoites.</text>
</comment>
<comment type="similarity">
    <text evidence="2">Belongs to the peptidase M18 family.</text>
</comment>
<proteinExistence type="evidence at protein level"/>
<organism evidence="11">
    <name type="scientific">Plasmodium falciparum (isolate 3D7)</name>
    <dbReference type="NCBI Taxonomy" id="36329"/>
    <lineage>
        <taxon>Eukaryota</taxon>
        <taxon>Sar</taxon>
        <taxon>Alveolata</taxon>
        <taxon>Apicomplexa</taxon>
        <taxon>Aconoidasida</taxon>
        <taxon>Haemosporida</taxon>
        <taxon>Plasmodiidae</taxon>
        <taxon>Plasmodium</taxon>
        <taxon>Plasmodium (Laverania)</taxon>
    </lineage>
</organism>
<evidence type="ECO:0000250" key="1">
    <source>
        <dbReference type="UniProtKB" id="Q9ULA0"/>
    </source>
</evidence>
<evidence type="ECO:0000255" key="2">
    <source>
        <dbReference type="RuleBase" id="RU004386"/>
    </source>
</evidence>
<evidence type="ECO:0000269" key="3">
    <source>
    </source>
</evidence>
<evidence type="ECO:0000269" key="4">
    <source>
    </source>
</evidence>
<evidence type="ECO:0000269" key="5">
    <source>
    </source>
</evidence>
<evidence type="ECO:0000303" key="6">
    <source>
    </source>
</evidence>
<evidence type="ECO:0000303" key="7">
    <source>
    </source>
</evidence>
<evidence type="ECO:0000305" key="8"/>
<evidence type="ECO:0000305" key="9">
    <source>
    </source>
</evidence>
<evidence type="ECO:0000312" key="10">
    <source>
        <dbReference type="EMBL" id="CAD52000.1"/>
    </source>
</evidence>
<evidence type="ECO:0000312" key="11">
    <source>
        <dbReference type="Proteomes" id="UP000001450"/>
    </source>
</evidence>
<evidence type="ECO:0007744" key="12">
    <source>
        <dbReference type="PDB" id="4EME"/>
    </source>
</evidence>
<evidence type="ECO:0007829" key="13">
    <source>
        <dbReference type="PDB" id="4EME"/>
    </source>
</evidence>
<protein>
    <recommendedName>
        <fullName evidence="6">Aspartyl aminopeptidase</fullName>
        <ecNumber evidence="3 5 9">3.4.11.21</ecNumber>
    </recommendedName>
    <alternativeName>
        <fullName evidence="6">M18 aspartyl aminopeptidase</fullName>
        <shortName evidence="6">PfM18AAP</shortName>
    </alternativeName>
</protein>
<accession>Q8I2J3</accession>
<keyword id="KW-0002">3D-structure</keyword>
<keyword id="KW-0031">Aminopeptidase</keyword>
<keyword id="KW-0963">Cytoplasm</keyword>
<keyword id="KW-0378">Hydrolase</keyword>
<keyword id="KW-0479">Metal-binding</keyword>
<keyword id="KW-0482">Metalloprotease</keyword>
<keyword id="KW-0645">Protease</keyword>
<keyword id="KW-1185">Reference proteome</keyword>
<keyword id="KW-0862">Zinc</keyword>
<sequence>MDKKAREYAQDALKFIQRSGSNFLACKNLKERLENNGFINLSEGETWNLNKNEGYVLCKENRNICGFFVGKNFNIDTGSILISIGHIDSCALKISPNNNVIKKKIHQINVECYGSGLWHTWFDRSLGLSGQVLYKKGNKLVEKLIQINKSVLFLPSLAIHLQNRTRYDFSVKINYENHIKPIISTTLFNQLNKCKRNNVHHDTILTTDTKFSHKENSQNKRDDQMCHSFNDKDVSNHNLDKNTIEHLTNQQNEEKNKHTKDNPNSKDIVEHINTDNSYPLLYLLSKELNCKEEDILDFELCLMDTQEPCFTGVYEEFIEGARFDNLLGSFCVFEGFIELVNSIKNHTSNENTNHTNNITNDINDNIHNNLYISIGYDHEEIGSLSEVGARSYCTKNFIDRIISSVFKKEIHEKNLSVQEIYGNLVNRSFILNVDMAHCSHPNYPETVQDNHQLFFHEGIAIKYNTNKNYVTSPLHASLIKRTFELYYNKYKQQIKYQNFMVKNDTPCGSTVGSMVAANLSMPGIDIGIPQLAMHSIREIAAVHDVFFLIKGVFAFYTYYNQVLSTCVHDK</sequence>
<dbReference type="EC" id="3.4.11.21" evidence="3 5 9"/>
<dbReference type="EMBL" id="AL844508">
    <property type="protein sequence ID" value="CAD52000.1"/>
    <property type="molecule type" value="Genomic_DNA"/>
</dbReference>
<dbReference type="RefSeq" id="XP_001352189.1">
    <property type="nucleotide sequence ID" value="XM_001352153.1"/>
</dbReference>
<dbReference type="PDB" id="4EME">
    <property type="method" value="X-ray"/>
    <property type="resolution" value="2.60 A"/>
    <property type="chains" value="A/B/C/D=2-570"/>
</dbReference>
<dbReference type="PDBsum" id="4EME"/>
<dbReference type="SMR" id="Q8I2J3"/>
<dbReference type="FunCoup" id="Q8I2J3">
    <property type="interactions" value="391"/>
</dbReference>
<dbReference type="STRING" id="36329.Q8I2J3"/>
<dbReference type="BindingDB" id="Q8I2J3"/>
<dbReference type="ChEMBL" id="CHEMBL1293263"/>
<dbReference type="DrugCentral" id="Q8I2J3"/>
<dbReference type="MEROPS" id="M18.003"/>
<dbReference type="PaxDb" id="5833-PFI1570c"/>
<dbReference type="EnsemblProtists" id="CAD52000">
    <property type="protein sequence ID" value="CAD52000"/>
    <property type="gene ID" value="PF3D7_0932300"/>
</dbReference>
<dbReference type="GeneID" id="813594"/>
<dbReference type="KEGG" id="pfa:PF3D7_0932300"/>
<dbReference type="VEuPathDB" id="PlasmoDB:PF3D7_0932300"/>
<dbReference type="HOGENOM" id="CLU_019532_2_0_1"/>
<dbReference type="InParanoid" id="Q8I2J3"/>
<dbReference type="OMA" id="GPILKVN"/>
<dbReference type="OrthoDB" id="9880441at2759"/>
<dbReference type="PhylomeDB" id="Q8I2J3"/>
<dbReference type="BRENDA" id="3.4.11.21">
    <property type="organism ID" value="4889"/>
</dbReference>
<dbReference type="BRENDA" id="3.4.11.7">
    <property type="organism ID" value="4889"/>
</dbReference>
<dbReference type="EvolutionaryTrace" id="Q8I2J3"/>
<dbReference type="Proteomes" id="UP000001450">
    <property type="component" value="Chromosome 9"/>
</dbReference>
<dbReference type="GO" id="GO:0005737">
    <property type="term" value="C:cytoplasm"/>
    <property type="evidence" value="ECO:0000314"/>
    <property type="project" value="UniProtKB"/>
</dbReference>
<dbReference type="GO" id="GO:0070006">
    <property type="term" value="F:metalloaminopeptidase activity"/>
    <property type="evidence" value="ECO:0000314"/>
    <property type="project" value="UniProtKB"/>
</dbReference>
<dbReference type="GO" id="GO:0008270">
    <property type="term" value="F:zinc ion binding"/>
    <property type="evidence" value="ECO:0000314"/>
    <property type="project" value="UniProtKB"/>
</dbReference>
<dbReference type="GO" id="GO:0043171">
    <property type="term" value="P:peptide catabolic process"/>
    <property type="evidence" value="ECO:0000314"/>
    <property type="project" value="UniProtKB"/>
</dbReference>
<dbReference type="GO" id="GO:0006508">
    <property type="term" value="P:proteolysis"/>
    <property type="evidence" value="ECO:0000314"/>
    <property type="project" value="UniProtKB"/>
</dbReference>
<dbReference type="CDD" id="cd05658">
    <property type="entry name" value="M18_DAP"/>
    <property type="match status" value="1"/>
</dbReference>
<dbReference type="FunFam" id="3.40.630.10:FF:000090">
    <property type="entry name" value="M18 aspartyl aminopeptidase"/>
    <property type="match status" value="1"/>
</dbReference>
<dbReference type="FunFam" id="3.40.630.10:FF:000096">
    <property type="entry name" value="M18 aspartyl aminopeptidase"/>
    <property type="match status" value="1"/>
</dbReference>
<dbReference type="Gene3D" id="2.30.250.10">
    <property type="entry name" value="Aminopeptidase i, Domain 2"/>
    <property type="match status" value="1"/>
</dbReference>
<dbReference type="Gene3D" id="3.40.630.10">
    <property type="entry name" value="Zn peptidases"/>
    <property type="match status" value="1"/>
</dbReference>
<dbReference type="InterPro" id="IPR001948">
    <property type="entry name" value="Peptidase_M18"/>
</dbReference>
<dbReference type="InterPro" id="IPR023358">
    <property type="entry name" value="Peptidase_M18_dom2"/>
</dbReference>
<dbReference type="PANTHER" id="PTHR28570">
    <property type="entry name" value="ASPARTYL AMINOPEPTIDASE"/>
    <property type="match status" value="1"/>
</dbReference>
<dbReference type="PANTHER" id="PTHR28570:SF3">
    <property type="entry name" value="ASPARTYL AMINOPEPTIDASE"/>
    <property type="match status" value="1"/>
</dbReference>
<dbReference type="Pfam" id="PF02127">
    <property type="entry name" value="Peptidase_M18"/>
    <property type="match status" value="2"/>
</dbReference>
<dbReference type="PRINTS" id="PR00932">
    <property type="entry name" value="AMINO1PTASE"/>
</dbReference>
<dbReference type="SUPFAM" id="SSF101821">
    <property type="entry name" value="Aminopeptidase/glucanase lid domain"/>
    <property type="match status" value="1"/>
</dbReference>
<dbReference type="SUPFAM" id="SSF53187">
    <property type="entry name" value="Zn-dependent exopeptidases"/>
    <property type="match status" value="1"/>
</dbReference>
<gene>
    <name evidence="6" type="primary">M18AAP</name>
    <name evidence="7" type="synonym">DAP</name>
    <name evidence="10" type="ORF">PF3D7_0932300</name>
    <name type="ORF">PFI1570c</name>
</gene>
<feature type="chain" id="PRO_0000457773" description="Aspartyl aminopeptidase">
    <location>
        <begin position="1"/>
        <end position="570"/>
    </location>
</feature>
<feature type="binding site" evidence="5 12">
    <location>
        <position position="86"/>
    </location>
    <ligand>
        <name>Zn(2+)</name>
        <dbReference type="ChEBI" id="CHEBI:29105"/>
        <label>1</label>
    </ligand>
</feature>
<feature type="binding site" evidence="1">
    <location>
        <position position="160"/>
    </location>
    <ligand>
        <name>substrate</name>
    </ligand>
</feature>
<feature type="binding site" evidence="5 12">
    <location>
        <position position="324"/>
    </location>
    <ligand>
        <name>Zn(2+)</name>
        <dbReference type="ChEBI" id="CHEBI:29105"/>
        <label>1</label>
    </ligand>
</feature>
<feature type="binding site" evidence="5 12">
    <location>
        <position position="324"/>
    </location>
    <ligand>
        <name>Zn(2+)</name>
        <dbReference type="ChEBI" id="CHEBI:29105"/>
        <label>2</label>
    </ligand>
</feature>
<feature type="binding site" evidence="1">
    <location>
        <position position="379"/>
    </location>
    <ligand>
        <name>substrate</name>
    </ligand>
</feature>
<feature type="binding site" evidence="5 12">
    <location>
        <position position="380"/>
    </location>
    <ligand>
        <name>Zn(2+)</name>
        <dbReference type="ChEBI" id="CHEBI:29105"/>
        <label>2</label>
    </ligand>
</feature>
<feature type="binding site" evidence="1">
    <location>
        <position position="434"/>
    </location>
    <ligand>
        <name>substrate</name>
    </ligand>
</feature>
<feature type="binding site" evidence="5 12">
    <location>
        <position position="434"/>
    </location>
    <ligand>
        <name>Zn(2+)</name>
        <dbReference type="ChEBI" id="CHEBI:29105"/>
        <label>1</label>
    </ligand>
</feature>
<feature type="binding site" evidence="1">
    <location>
        <position position="437"/>
    </location>
    <ligand>
        <name>substrate</name>
    </ligand>
</feature>
<feature type="binding site" evidence="1">
    <location>
        <position position="462"/>
    </location>
    <ligand>
        <name>substrate</name>
    </ligand>
</feature>
<feature type="binding site" evidence="1">
    <location>
        <position position="469"/>
    </location>
    <ligand>
        <name>substrate</name>
    </ligand>
</feature>
<feature type="binding site" evidence="5 12">
    <location>
        <position position="534"/>
    </location>
    <ligand>
        <name>Zn(2+)</name>
        <dbReference type="ChEBI" id="CHEBI:29105"/>
        <label>2</label>
    </ligand>
</feature>
<feature type="helix" evidence="13">
    <location>
        <begin position="2"/>
        <end position="18"/>
    </location>
</feature>
<feature type="helix" evidence="13">
    <location>
        <begin position="22"/>
        <end position="35"/>
    </location>
</feature>
<feature type="strand" evidence="13">
    <location>
        <begin position="54"/>
        <end position="59"/>
    </location>
</feature>
<feature type="turn" evidence="13">
    <location>
        <begin position="60"/>
        <end position="62"/>
    </location>
</feature>
<feature type="strand" evidence="13">
    <location>
        <begin position="63"/>
        <end position="69"/>
    </location>
</feature>
<feature type="turn" evidence="13">
    <location>
        <begin position="75"/>
        <end position="77"/>
    </location>
</feature>
<feature type="strand" evidence="13">
    <location>
        <begin position="80"/>
        <end position="86"/>
    </location>
</feature>
<feature type="strand" evidence="13">
    <location>
        <begin position="91"/>
        <end position="102"/>
    </location>
</feature>
<feature type="strand" evidence="13">
    <location>
        <begin position="105"/>
        <end position="115"/>
    </location>
</feature>
<feature type="helix" evidence="13">
    <location>
        <begin position="118"/>
        <end position="121"/>
    </location>
</feature>
<feature type="strand" evidence="13">
    <location>
        <begin position="126"/>
        <end position="136"/>
    </location>
</feature>
<feature type="strand" evidence="13">
    <location>
        <begin position="139"/>
        <end position="153"/>
    </location>
</feature>
<feature type="helix" evidence="13">
    <location>
        <begin position="159"/>
        <end position="161"/>
    </location>
</feature>
<feature type="turn" evidence="13">
    <location>
        <begin position="175"/>
        <end position="178"/>
    </location>
</feature>
<feature type="strand" evidence="13">
    <location>
        <begin position="182"/>
        <end position="185"/>
    </location>
</feature>
<feature type="helix" evidence="13">
    <location>
        <begin position="186"/>
        <end position="194"/>
    </location>
</feature>
<feature type="helix" evidence="13">
    <location>
        <begin position="278"/>
        <end position="288"/>
    </location>
</feature>
<feature type="helix" evidence="13">
    <location>
        <begin position="292"/>
        <end position="294"/>
    </location>
</feature>
<feature type="strand" evidence="13">
    <location>
        <begin position="295"/>
        <end position="304"/>
    </location>
</feature>
<feature type="strand" evidence="13">
    <location>
        <begin position="309"/>
        <end position="312"/>
    </location>
</feature>
<feature type="strand" evidence="13">
    <location>
        <begin position="317"/>
        <end position="320"/>
    </location>
</feature>
<feature type="helix" evidence="13">
    <location>
        <begin position="323"/>
        <end position="343"/>
    </location>
</feature>
<feature type="helix" evidence="13">
    <location>
        <begin position="366"/>
        <end position="368"/>
    </location>
</feature>
<feature type="strand" evidence="13">
    <location>
        <begin position="370"/>
        <end position="377"/>
    </location>
</feature>
<feature type="helix" evidence="13">
    <location>
        <begin position="379"/>
        <end position="381"/>
    </location>
</feature>
<feature type="helix" evidence="13">
    <location>
        <begin position="393"/>
        <end position="405"/>
    </location>
</feature>
<feature type="helix" evidence="13">
    <location>
        <begin position="407"/>
        <end position="411"/>
    </location>
</feature>
<feature type="helix" evidence="13">
    <location>
        <begin position="417"/>
        <end position="425"/>
    </location>
</feature>
<feature type="strand" evidence="13">
    <location>
        <begin position="429"/>
        <end position="433"/>
    </location>
</feature>
<feature type="helix" evidence="13">
    <location>
        <begin position="444"/>
        <end position="446"/>
    </location>
</feature>
<feature type="strand" evidence="13">
    <location>
        <begin position="459"/>
        <end position="462"/>
    </location>
</feature>
<feature type="strand" evidence="13">
    <location>
        <begin position="467"/>
        <end position="469"/>
    </location>
</feature>
<feature type="helix" evidence="13">
    <location>
        <begin position="473"/>
        <end position="490"/>
    </location>
</feature>
<feature type="strand" evidence="13">
    <location>
        <begin position="496"/>
        <end position="499"/>
    </location>
</feature>
<feature type="strand" evidence="13">
    <location>
        <begin position="503"/>
        <end position="505"/>
    </location>
</feature>
<feature type="helix" evidence="13">
    <location>
        <begin position="512"/>
        <end position="519"/>
    </location>
</feature>
<feature type="strand" evidence="13">
    <location>
        <begin position="523"/>
        <end position="527"/>
    </location>
</feature>
<feature type="strand" evidence="13">
    <location>
        <begin position="529"/>
        <end position="532"/>
    </location>
</feature>
<feature type="strand" evidence="13">
    <location>
        <begin position="535"/>
        <end position="541"/>
    </location>
</feature>
<feature type="helix" evidence="13">
    <location>
        <begin position="542"/>
        <end position="564"/>
    </location>
</feature>
<reference evidence="11" key="1">
    <citation type="journal article" date="2002" name="Nature">
        <title>Genome sequence of the human malaria parasite Plasmodium falciparum.</title>
        <authorList>
            <person name="Gardner M.J."/>
            <person name="Hall N."/>
            <person name="Fung E."/>
            <person name="White O."/>
            <person name="Berriman M."/>
            <person name="Hyman R.W."/>
            <person name="Carlton J.M."/>
            <person name="Pain A."/>
            <person name="Nelson K.E."/>
            <person name="Bowman S."/>
            <person name="Paulsen I.T."/>
            <person name="James K.D."/>
            <person name="Eisen J.A."/>
            <person name="Rutherford K.M."/>
            <person name="Salzberg S.L."/>
            <person name="Craig A."/>
            <person name="Kyes S."/>
            <person name="Chan M.-S."/>
            <person name="Nene V."/>
            <person name="Shallom S.J."/>
            <person name="Suh B."/>
            <person name="Peterson J."/>
            <person name="Angiuoli S."/>
            <person name="Pertea M."/>
            <person name="Allen J."/>
            <person name="Selengut J."/>
            <person name="Haft D."/>
            <person name="Mather M.W."/>
            <person name="Vaidya A.B."/>
            <person name="Martin D.M.A."/>
            <person name="Fairlamb A.H."/>
            <person name="Fraunholz M.J."/>
            <person name="Roos D.S."/>
            <person name="Ralph S.A."/>
            <person name="McFadden G.I."/>
            <person name="Cummings L.M."/>
            <person name="Subramanian G.M."/>
            <person name="Mungall C."/>
            <person name="Venter J.C."/>
            <person name="Carucci D.J."/>
            <person name="Hoffman S.L."/>
            <person name="Newbold C."/>
            <person name="Davis R.W."/>
            <person name="Fraser C.M."/>
            <person name="Barrell B.G."/>
        </authorList>
    </citation>
    <scope>NUCLEOTIDE SEQUENCE [LARGE SCALE GENOMIC DNA]</scope>
    <source>
        <strain evidence="11">3D7</strain>
    </source>
</reference>
<reference evidence="11" key="2">
    <citation type="journal article" date="2002" name="Nature">
        <title>Sequence of Plasmodium falciparum chromosomes 1, 3-9 and 13.</title>
        <authorList>
            <person name="Hall N."/>
            <person name="Pain A."/>
            <person name="Berriman M."/>
            <person name="Churcher C.M."/>
            <person name="Harris B."/>
            <person name="Harris D."/>
            <person name="Mungall K.L."/>
            <person name="Bowman S."/>
            <person name="Atkin R."/>
            <person name="Baker S."/>
            <person name="Barron A."/>
            <person name="Brooks K."/>
            <person name="Buckee C.O."/>
            <person name="Burrows C."/>
            <person name="Cherevach I."/>
            <person name="Chillingworth C."/>
            <person name="Chillingworth T."/>
            <person name="Christodoulou Z."/>
            <person name="Clark L."/>
            <person name="Clark R."/>
            <person name="Corton C."/>
            <person name="Cronin A."/>
            <person name="Davies R.M."/>
            <person name="Davis P."/>
            <person name="Dear P."/>
            <person name="Dearden F."/>
            <person name="Doggett J."/>
            <person name="Feltwell T."/>
            <person name="Goble A."/>
            <person name="Goodhead I."/>
            <person name="Gwilliam R."/>
            <person name="Hamlin N."/>
            <person name="Hance Z."/>
            <person name="Harper D."/>
            <person name="Hauser H."/>
            <person name="Hornsby T."/>
            <person name="Holroyd S."/>
            <person name="Horrocks P."/>
            <person name="Humphray S."/>
            <person name="Jagels K."/>
            <person name="James K.D."/>
            <person name="Johnson D."/>
            <person name="Kerhornou A."/>
            <person name="Knights A."/>
            <person name="Konfortov B."/>
            <person name="Kyes S."/>
            <person name="Larke N."/>
            <person name="Lawson D."/>
            <person name="Lennard N."/>
            <person name="Line A."/>
            <person name="Maddison M."/>
            <person name="Mclean J."/>
            <person name="Mooney P."/>
            <person name="Moule S."/>
            <person name="Murphy L."/>
            <person name="Oliver K."/>
            <person name="Ormond D."/>
            <person name="Price C."/>
            <person name="Quail M.A."/>
            <person name="Rabbinowitsch E."/>
            <person name="Rajandream M.A."/>
            <person name="Rutter S."/>
            <person name="Rutherford K.M."/>
            <person name="Sanders M."/>
            <person name="Simmonds M."/>
            <person name="Seeger K."/>
            <person name="Sharp S."/>
            <person name="Smith R."/>
            <person name="Squares R."/>
            <person name="Squares S."/>
            <person name="Stevens K."/>
            <person name="Taylor K."/>
            <person name="Tivey A."/>
            <person name="Unwin L."/>
            <person name="Whitehead S."/>
            <person name="Woodward J.R."/>
            <person name="Sulston J.E."/>
            <person name="Craig A."/>
            <person name="Newbold C."/>
            <person name="Barrell B.G."/>
        </authorList>
    </citation>
    <scope>NUCLEOTIDE SEQUENCE [LARGE SCALE GENOMIC DNA]</scope>
    <source>
        <strain evidence="11">3D7</strain>
    </source>
</reference>
<reference evidence="8" key="3">
    <citation type="journal article" date="2007" name="J. Biol. Chem.">
        <title>The M18 aspartyl aminopeptidase of the human malaria parasite Plasmodium falciparum.</title>
        <authorList>
            <person name="Teuscher F."/>
            <person name="Lowther J."/>
            <person name="Skinner-Adams T.S."/>
            <person name="Spielmann T."/>
            <person name="Dixon M.W."/>
            <person name="Stack C.M."/>
            <person name="Donnelly S."/>
            <person name="Mucha A."/>
            <person name="Kafarski P."/>
            <person name="Vassiliou S."/>
            <person name="Gardiner D.L."/>
            <person name="Dalton J.P."/>
            <person name="Trenholme K.R."/>
        </authorList>
    </citation>
    <scope>FUNCTION</scope>
    <scope>CATALYTIC ACTIVITY</scope>
    <scope>ACTIVITY REGULATION</scope>
    <scope>BIOPHYSICOCHEMICAL PROPERTIES</scope>
    <scope>SUBUNIT</scope>
    <scope>SUBCELLULAR LOCATION</scope>
    <scope>DEVELOPMENTAL STAGE</scope>
    <scope>DISRUPTION PHENOTYPE</scope>
    <source>
        <strain evidence="6">3D7</strain>
        <strain evidence="6">D10</strain>
    </source>
</reference>
<reference evidence="8" key="4">
    <citation type="journal article" date="2007" name="J. Biol. Chem.">
        <title>Roles for two aminopeptidases in vacuolar hemoglobin catabolism in Plasmodium falciparum.</title>
        <authorList>
            <person name="Dalal S."/>
            <person name="Klemba M."/>
        </authorList>
    </citation>
    <scope>FUNCTION</scope>
    <scope>CATALYTIC ACTIVITY</scope>
    <scope>SUBCELLULAR LOCATION</scope>
    <scope>DEVELOPMENTAL STAGE</scope>
</reference>
<reference evidence="12" key="5">
    <citation type="journal article" date="2012" name="J. Mol. Biol.">
        <title>X-ray crystal structure and specificity of the Plasmodium falciparum malaria aminopeptidase PfM18AAP.</title>
        <authorList>
            <person name="Sivaraman K.K."/>
            <person name="Oellig C.A."/>
            <person name="Huynh K."/>
            <person name="Atkinson S.C."/>
            <person name="Poreba M."/>
            <person name="Perugini M.A."/>
            <person name="Trenholme K.R."/>
            <person name="Gardiner D.L."/>
            <person name="Salvesen G."/>
            <person name="Drag M."/>
            <person name="Dalton J.P."/>
            <person name="Whisstock J.C."/>
            <person name="McGowan S."/>
        </authorList>
    </citation>
    <scope>X-RAY CRYSTALLOGRAPHY (2.60 ANGSTROMS) OF 2-570 IN COMPLEX WITH ZINC</scope>
    <scope>FUNCTION</scope>
    <scope>CATALYTIC ACTIVITY</scope>
    <scope>COFACTOR</scope>
    <scope>ACTIVITY REGULATION</scope>
    <scope>BIOPHYSICOCHEMICAL PROPERTIES</scope>
    <scope>SUBUNIT</scope>
</reference>
<name>DNPEP_PLAF7</name>